<feature type="chain" id="PRO_0000249320" description="Probable beta-tubulin polyglutamylase">
    <location>
        <begin position="1"/>
        <end position="1195"/>
    </location>
</feature>
<feature type="domain" description="TTL" evidence="4">
    <location>
        <begin position="350"/>
        <end position="703"/>
    </location>
</feature>
<feature type="region of interest" description="Disordered" evidence="5">
    <location>
        <begin position="1"/>
        <end position="110"/>
    </location>
</feature>
<feature type="region of interest" description="Disordered" evidence="5">
    <location>
        <begin position="281"/>
        <end position="343"/>
    </location>
</feature>
<feature type="region of interest" description="c-MTBD region" evidence="2">
    <location>
        <begin position="674"/>
        <end position="756"/>
    </location>
</feature>
<feature type="region of interest" description="Disordered" evidence="5">
    <location>
        <begin position="783"/>
        <end position="862"/>
    </location>
</feature>
<feature type="coiled-coil region" evidence="3">
    <location>
        <begin position="59"/>
        <end position="103"/>
    </location>
</feature>
<feature type="coiled-coil region" evidence="3">
    <location>
        <begin position="144"/>
        <end position="260"/>
    </location>
</feature>
<feature type="compositionally biased region" description="Acidic residues" evidence="5">
    <location>
        <begin position="17"/>
        <end position="27"/>
    </location>
</feature>
<feature type="compositionally biased region" description="Acidic residues" evidence="5">
    <location>
        <begin position="44"/>
        <end position="79"/>
    </location>
</feature>
<feature type="compositionally biased region" description="Low complexity" evidence="5">
    <location>
        <begin position="80"/>
        <end position="89"/>
    </location>
</feature>
<feature type="compositionally biased region" description="Polar residues" evidence="5">
    <location>
        <begin position="90"/>
        <end position="110"/>
    </location>
</feature>
<feature type="compositionally biased region" description="Acidic residues" evidence="5">
    <location>
        <begin position="294"/>
        <end position="316"/>
    </location>
</feature>
<feature type="compositionally biased region" description="Basic residues" evidence="5">
    <location>
        <begin position="322"/>
        <end position="334"/>
    </location>
</feature>
<feature type="compositionally biased region" description="Polar residues" evidence="5">
    <location>
        <begin position="825"/>
        <end position="849"/>
    </location>
</feature>
<feature type="compositionally biased region" description="Acidic residues" evidence="5">
    <location>
        <begin position="850"/>
        <end position="860"/>
    </location>
</feature>
<feature type="binding site" evidence="1">
    <location>
        <begin position="500"/>
        <end position="503"/>
    </location>
    <ligand>
        <name>ATP</name>
        <dbReference type="ChEBI" id="CHEBI:30616"/>
    </ligand>
</feature>
<feature type="binding site" evidence="1">
    <location>
        <position position="513"/>
    </location>
    <ligand>
        <name>ATP</name>
        <dbReference type="ChEBI" id="CHEBI:30616"/>
    </ligand>
</feature>
<feature type="binding site" evidence="1">
    <location>
        <position position="515"/>
    </location>
    <ligand>
        <name>ATP</name>
        <dbReference type="ChEBI" id="CHEBI:30616"/>
    </ligand>
</feature>
<proteinExistence type="inferred from homology"/>
<evidence type="ECO:0000250" key="1">
    <source>
        <dbReference type="UniProtKB" id="Q6ZT98"/>
    </source>
</evidence>
<evidence type="ECO:0000250" key="2">
    <source>
        <dbReference type="UniProtKB" id="Q8N841"/>
    </source>
</evidence>
<evidence type="ECO:0000255" key="3"/>
<evidence type="ECO:0000255" key="4">
    <source>
        <dbReference type="PROSITE-ProRule" id="PRU00568"/>
    </source>
</evidence>
<evidence type="ECO:0000256" key="5">
    <source>
        <dbReference type="SAM" id="MobiDB-lite"/>
    </source>
</evidence>
<evidence type="ECO:0000269" key="6">
    <source>
    </source>
</evidence>
<protein>
    <recommendedName>
        <fullName>Probable beta-tubulin polyglutamylase</fullName>
        <ecNumber>6.-.-.-</ecNumber>
    </recommendedName>
    <alternativeName>
        <fullName>Tubulin-tyrosine ligase family protein 6A</fullName>
    </alternativeName>
</protein>
<name>TTL6A_TETTS</name>
<dbReference type="EC" id="6.-.-.-"/>
<dbReference type="EMBL" id="GG662656">
    <property type="protein sequence ID" value="EAR98012.2"/>
    <property type="molecule type" value="Genomic_DNA"/>
</dbReference>
<dbReference type="RefSeq" id="XP_001018257.2">
    <property type="nucleotide sequence ID" value="XM_001018257.2"/>
</dbReference>
<dbReference type="SMR" id="Q23MT7"/>
<dbReference type="EnsemblProtists" id="EAR98012">
    <property type="protein sequence ID" value="EAR98012"/>
    <property type="gene ID" value="TTHERM_00284020"/>
</dbReference>
<dbReference type="GeneID" id="7847221"/>
<dbReference type="KEGG" id="tet:TTHERM_00284020"/>
<dbReference type="eggNOG" id="KOG2158">
    <property type="taxonomic scope" value="Eukaryota"/>
</dbReference>
<dbReference type="HOGENOM" id="CLU_272087_0_0_1"/>
<dbReference type="InParanoid" id="Q23MT7"/>
<dbReference type="OrthoDB" id="202825at2759"/>
<dbReference type="BRENDA" id="6.3.2.B24">
    <property type="organism ID" value="6245"/>
</dbReference>
<dbReference type="Proteomes" id="UP000009168">
    <property type="component" value="Unassembled WGS sequence"/>
</dbReference>
<dbReference type="GO" id="GO:0036064">
    <property type="term" value="C:ciliary basal body"/>
    <property type="evidence" value="ECO:0007669"/>
    <property type="project" value="TreeGrafter"/>
</dbReference>
<dbReference type="GO" id="GO:0005737">
    <property type="term" value="C:cytoplasm"/>
    <property type="evidence" value="ECO:0007669"/>
    <property type="project" value="UniProtKB-KW"/>
</dbReference>
<dbReference type="GO" id="GO:0005874">
    <property type="term" value="C:microtubule"/>
    <property type="evidence" value="ECO:0007669"/>
    <property type="project" value="UniProtKB-KW"/>
</dbReference>
<dbReference type="GO" id="GO:0005524">
    <property type="term" value="F:ATP binding"/>
    <property type="evidence" value="ECO:0007669"/>
    <property type="project" value="UniProtKB-KW"/>
</dbReference>
<dbReference type="GO" id="GO:0015631">
    <property type="term" value="F:tubulin binding"/>
    <property type="evidence" value="ECO:0000250"/>
    <property type="project" value="UniProtKB"/>
</dbReference>
<dbReference type="GO" id="GO:0070740">
    <property type="term" value="F:tubulin-glutamic acid ligase activity"/>
    <property type="evidence" value="ECO:0000314"/>
    <property type="project" value="UniProtKB"/>
</dbReference>
<dbReference type="GO" id="GO:0000226">
    <property type="term" value="P:microtubule cytoskeleton organization"/>
    <property type="evidence" value="ECO:0007669"/>
    <property type="project" value="TreeGrafter"/>
</dbReference>
<dbReference type="GO" id="GO:0018095">
    <property type="term" value="P:protein polyglutamylation"/>
    <property type="evidence" value="ECO:0000314"/>
    <property type="project" value="UniProtKB"/>
</dbReference>
<dbReference type="FunFam" id="3.30.470.20:FF:000009">
    <property type="entry name" value="tubulin polyglutamylase TTLL5 isoform X1"/>
    <property type="match status" value="1"/>
</dbReference>
<dbReference type="Gene3D" id="3.30.470.20">
    <property type="entry name" value="ATP-grasp fold, B domain"/>
    <property type="match status" value="1"/>
</dbReference>
<dbReference type="InterPro" id="IPR004344">
    <property type="entry name" value="TTL/TTLL_fam"/>
</dbReference>
<dbReference type="PANTHER" id="PTHR12241">
    <property type="entry name" value="TUBULIN POLYGLUTAMYLASE"/>
    <property type="match status" value="1"/>
</dbReference>
<dbReference type="PANTHER" id="PTHR12241:SF147">
    <property type="entry name" value="TUBULIN POLYGLUTAMYLASE TTLL7"/>
    <property type="match status" value="1"/>
</dbReference>
<dbReference type="Pfam" id="PF03133">
    <property type="entry name" value="TTL"/>
    <property type="match status" value="1"/>
</dbReference>
<dbReference type="SUPFAM" id="SSF56059">
    <property type="entry name" value="Glutathione synthetase ATP-binding domain-like"/>
    <property type="match status" value="1"/>
</dbReference>
<dbReference type="PROSITE" id="PS51221">
    <property type="entry name" value="TTL"/>
    <property type="match status" value="1"/>
</dbReference>
<reference key="1">
    <citation type="journal article" date="2006" name="PLoS Biol.">
        <title>Macronuclear genome sequence of the ciliate Tetrahymena thermophila, a model eukaryote.</title>
        <authorList>
            <person name="Eisen J.A."/>
            <person name="Coyne R.S."/>
            <person name="Wu M."/>
            <person name="Wu D."/>
            <person name="Thiagarajan M."/>
            <person name="Wortman J.R."/>
            <person name="Badger J.H."/>
            <person name="Ren Q."/>
            <person name="Amedeo P."/>
            <person name="Jones K.M."/>
            <person name="Tallon L.J."/>
            <person name="Delcher A.L."/>
            <person name="Salzberg S.L."/>
            <person name="Silva J.C."/>
            <person name="Haas B.J."/>
            <person name="Majoros W.H."/>
            <person name="Farzad M."/>
            <person name="Carlton J.M."/>
            <person name="Smith R.K. Jr."/>
            <person name="Garg J."/>
            <person name="Pearlman R.E."/>
            <person name="Karrer K.M."/>
            <person name="Sun L."/>
            <person name="Manning G."/>
            <person name="Elde N.C."/>
            <person name="Turkewitz A.P."/>
            <person name="Asai D.J."/>
            <person name="Wilkes D.E."/>
            <person name="Wang Y."/>
            <person name="Cai H."/>
            <person name="Collins K."/>
            <person name="Stewart B.A."/>
            <person name="Lee S.R."/>
            <person name="Wilamowska K."/>
            <person name="Weinberg Z."/>
            <person name="Ruzzo W.L."/>
            <person name="Wloga D."/>
            <person name="Gaertig J."/>
            <person name="Frankel J."/>
            <person name="Tsao C.-C."/>
            <person name="Gorovsky M.A."/>
            <person name="Keeling P.J."/>
            <person name="Waller R.F."/>
            <person name="Patron N.J."/>
            <person name="Cherry J.M."/>
            <person name="Stover N.A."/>
            <person name="Krieger C.J."/>
            <person name="del Toro C."/>
            <person name="Ryder H.F."/>
            <person name="Williamson S.C."/>
            <person name="Barbeau R.A."/>
            <person name="Hamilton E.P."/>
            <person name="Orias E."/>
        </authorList>
    </citation>
    <scope>NUCLEOTIDE SEQUENCE [LARGE SCALE GENOMIC DNA]</scope>
    <source>
        <strain>SB210</strain>
    </source>
</reference>
<reference key="2">
    <citation type="journal article" date="2005" name="Science">
        <title>Tubulin polyglutamylase enzymes are members of the TTL domain protein family.</title>
        <authorList>
            <person name="Janke C."/>
            <person name="Rogowski K."/>
            <person name="Wloga D."/>
            <person name="Regnard C."/>
            <person name="Kajava A.V."/>
            <person name="Strub J.-M."/>
            <person name="Temurak N."/>
            <person name="van Dijk J."/>
            <person name="Boucher D."/>
            <person name="van Dorsselaer A."/>
            <person name="Suryavanshi S."/>
            <person name="Gaertig J."/>
            <person name="Edde B."/>
        </authorList>
    </citation>
    <scope>FUNCTION</scope>
    <scope>SUBCELLULAR LOCATION</scope>
</reference>
<organism>
    <name type="scientific">Tetrahymena thermophila (strain SB210)</name>
    <dbReference type="NCBI Taxonomy" id="312017"/>
    <lineage>
        <taxon>Eukaryota</taxon>
        <taxon>Sar</taxon>
        <taxon>Alveolata</taxon>
        <taxon>Ciliophora</taxon>
        <taxon>Intramacronucleata</taxon>
        <taxon>Oligohymenophorea</taxon>
        <taxon>Hymenostomatida</taxon>
        <taxon>Tetrahymenina</taxon>
        <taxon>Tetrahymenidae</taxon>
        <taxon>Tetrahymena</taxon>
    </lineage>
</organism>
<gene>
    <name type="primary">Ttll6a</name>
    <name type="ORF">TTHERM_00284020</name>
</gene>
<sequence length="1195" mass="139535">MSQKDIYNKYSNQSADDQQEEDDDENQESSCQLSPEKDLGESLQGEDLDEDQGVIGEDDEEQEESYDEEDEEEDDEENNQDQQNNSESNLQYDKTNQKNQQTEMTDNQNEFLAEDYLSQIKTNEKSELKYQLDIQSNLSGENVQDMDEKLKQYIELNGKNENQQAAESKKIENDEIMKKSEENVHEKVVDNNQKLNIQQNNINDYQEDIKKDQSNNLVDIQQNNEIIKEVNSEDQQQKNEMDNKQSDIVLAQEESKQSEQVEAPIVKQKKIELRPKVIYDPKNDVDQYTGDYSDSGESDEEANNEDDDEDEDDESENESRSRKNKAQLLKKKNNKKEQAKKQQVKKVYKKQTLVLNVADTKYPVVKFVGKKIFKWKLAYDMESMDFDIFWTDNAVQPEQLGRMQPYQKINHFPGMFSLARKNHLARNLMKMRKQFPDQYKFFPQTWLLPAEYNDFKNQFEKSRSQQKIFIVKPEASCQGRGIFLTRSLDDLNPSDHYVVQRYLNKPYLIDGLKFDFRLYVLLAGCDPLRIYLYYEGLTRFATEKYQEVNRDNIEDMCMHLTNYAINKDNPNFKFNKDKEKMDVGHKRSLTSVLQLLEDQGHDVNKLWKDIKRVLIKTIISAQPTLAHHYKSCQPDNFMNNMCFEILGFDIILDSHLKPWVLEVNHTPSFSTDTPLDSYIKKNTIRDSLKLMNCTCKAKNEIINQRKEIMQKRVLTGKKVKYTPEEKLEEIKKAQQKRDEYEDKHLGGFERIFPMEDDEDDNFTEYMQYALKCYEEQTGANIRRNTKKVTEDPKKITNQPKKLNQPKDLEKIYNTKIGAKLPPRKPNSQTTINKGIPGQNGQRPSSSQLNEEGETIQCEDQEQNKDEAIENAITRSASGRMHDFRIKKQNSPYNIHQKFKNKIQNRVAIGVKELKLAEEPFQFEENINGKPSNPNVKKIQAYITSEKEQLEIKNMNILQDQNYNSSRAVQAKKPQIEPQVLFVQEPQTKKLQILNQAKPPQQKLQFQLIDNTAAQMEEERRQWLIQAQRNLQYQLSQQQYQPQQKLTLLPKGPPIHPQTNVMQSIADIPNSSNSKEILAAVGGAISGQYKTDKRVTIKQKGQIQNQSINQLKDNNGLFLQPKLFEIQSFQSSQQQQAQQAIQSSLDQNLIGINQNMVGLNDLFVSGKSHKVQPHYQAQQDSYSYQKHNSYSNYYQK</sequence>
<accession>Q23MT7</accession>
<comment type="function">
    <text evidence="6">Probable tubulin polyglutamylase with a strong preference for beta-tubulin.</text>
</comment>
<comment type="subcellular location">
    <subcellularLocation>
        <location evidence="6">Cytoplasm</location>
        <location evidence="6">Cytoskeleton</location>
    </subcellularLocation>
    <subcellularLocation>
        <location evidence="6">Cell projection</location>
        <location evidence="6">Cilium</location>
    </subcellularLocation>
    <subcellularLocation>
        <location evidence="6">Cytoplasm</location>
        <location evidence="6">Cytoskeleton</location>
        <location evidence="6">Cilium basal body</location>
    </subcellularLocation>
    <text>Associated with microtubules from cilia, basal bodies and cell body.</text>
</comment>
<comment type="domain">
    <text evidence="1 2">The flexible c-MTBD (cationic microtubule binding domain) region mediates binding to microtubules. It is positively charged and becomes ordered when bound to microtubules: it interacts with a negatively charged patch on tubulin. The presence of positive charges in the c-MTBD region is essential for proper binding.</text>
</comment>
<keyword id="KW-0067">ATP-binding</keyword>
<keyword id="KW-0966">Cell projection</keyword>
<keyword id="KW-0969">Cilium</keyword>
<keyword id="KW-0175">Coiled coil</keyword>
<keyword id="KW-0963">Cytoplasm</keyword>
<keyword id="KW-0206">Cytoskeleton</keyword>
<keyword id="KW-0436">Ligase</keyword>
<keyword id="KW-0493">Microtubule</keyword>
<keyword id="KW-0547">Nucleotide-binding</keyword>
<keyword id="KW-1185">Reference proteome</keyword>